<reference key="1">
    <citation type="submission" date="2007-07" db="EMBL/GenBank/DDBJ databases">
        <title>Complete genome sequence of Campylobacter jejuni subsp doylei 269.97 isolated from human blood.</title>
        <authorList>
            <person name="Fouts D.E."/>
            <person name="Mongodin E.F."/>
            <person name="Puiu D."/>
            <person name="Sebastian Y."/>
            <person name="Miller W.G."/>
            <person name="Mandrell R.E."/>
            <person name="Lastovica A.J."/>
            <person name="Nelson K.E."/>
        </authorList>
    </citation>
    <scope>NUCLEOTIDE SEQUENCE [LARGE SCALE GENOMIC DNA]</scope>
    <source>
        <strain>ATCC BAA-1458 / RM4099 / 269.97</strain>
    </source>
</reference>
<accession>A7H369</accession>
<organism>
    <name type="scientific">Campylobacter jejuni subsp. doylei (strain ATCC BAA-1458 / RM4099 / 269.97)</name>
    <dbReference type="NCBI Taxonomy" id="360109"/>
    <lineage>
        <taxon>Bacteria</taxon>
        <taxon>Pseudomonadati</taxon>
        <taxon>Campylobacterota</taxon>
        <taxon>Epsilonproteobacteria</taxon>
        <taxon>Campylobacterales</taxon>
        <taxon>Campylobacteraceae</taxon>
        <taxon>Campylobacter</taxon>
    </lineage>
</organism>
<proteinExistence type="inferred from homology"/>
<protein>
    <recommendedName>
        <fullName evidence="1">Putative membrane protein insertion efficiency factor</fullName>
    </recommendedName>
</protein>
<comment type="function">
    <text evidence="1">Could be involved in insertion of integral membrane proteins into the membrane.</text>
</comment>
<comment type="subcellular location">
    <subcellularLocation>
        <location evidence="1">Cell inner membrane</location>
        <topology evidence="1">Peripheral membrane protein</topology>
        <orientation evidence="1">Cytoplasmic side</orientation>
    </subcellularLocation>
</comment>
<comment type="similarity">
    <text evidence="1">Belongs to the UPF0161 family.</text>
</comment>
<gene>
    <name type="ordered locus">JJD26997_0822</name>
</gene>
<dbReference type="EMBL" id="CP000768">
    <property type="protein sequence ID" value="ABS44086.1"/>
    <property type="molecule type" value="Genomic_DNA"/>
</dbReference>
<dbReference type="KEGG" id="cjd:JJD26997_0822"/>
<dbReference type="HOGENOM" id="CLU_144811_4_0_7"/>
<dbReference type="Proteomes" id="UP000002302">
    <property type="component" value="Chromosome"/>
</dbReference>
<dbReference type="GO" id="GO:0005886">
    <property type="term" value="C:plasma membrane"/>
    <property type="evidence" value="ECO:0007669"/>
    <property type="project" value="UniProtKB-SubCell"/>
</dbReference>
<dbReference type="HAMAP" id="MF_00386">
    <property type="entry name" value="UPF0161_YidD"/>
    <property type="match status" value="1"/>
</dbReference>
<dbReference type="InterPro" id="IPR002696">
    <property type="entry name" value="Membr_insert_effic_factor_YidD"/>
</dbReference>
<dbReference type="NCBIfam" id="TIGR00278">
    <property type="entry name" value="membrane protein insertion efficiency factor YidD"/>
    <property type="match status" value="1"/>
</dbReference>
<dbReference type="PANTHER" id="PTHR33383">
    <property type="entry name" value="MEMBRANE PROTEIN INSERTION EFFICIENCY FACTOR-RELATED"/>
    <property type="match status" value="1"/>
</dbReference>
<dbReference type="PANTHER" id="PTHR33383:SF1">
    <property type="entry name" value="MEMBRANE PROTEIN INSERTION EFFICIENCY FACTOR-RELATED"/>
    <property type="match status" value="1"/>
</dbReference>
<dbReference type="Pfam" id="PF01809">
    <property type="entry name" value="YidD"/>
    <property type="match status" value="1"/>
</dbReference>
<dbReference type="SMART" id="SM01234">
    <property type="entry name" value="Haemolytic"/>
    <property type="match status" value="1"/>
</dbReference>
<name>YIDD_CAMJD</name>
<feature type="chain" id="PRO_1000013079" description="Putative membrane protein insertion efficiency factor">
    <location>
        <begin position="1"/>
        <end position="113"/>
    </location>
</feature>
<keyword id="KW-0997">Cell inner membrane</keyword>
<keyword id="KW-1003">Cell membrane</keyword>
<keyword id="KW-0472">Membrane</keyword>
<evidence type="ECO:0000255" key="1">
    <source>
        <dbReference type="HAMAP-Rule" id="MF_00386"/>
    </source>
</evidence>
<sequence>MICLKILRFYQKFLSPLKPAACRYYPSCSEYALWQFQKKNFFLAFLSTFFRILRCNPFFKGGFDYPKVSKNFYPMNLCFKPMFLAKKQLCFLYIPYKNKSFYLIKIIFKRTNQ</sequence>